<name>RS18_RICTY</name>
<comment type="function">
    <text evidence="1">Binds as a heterodimer with protein bS6 to the central domain of the 16S rRNA, where it helps stabilize the platform of the 30S subunit.</text>
</comment>
<comment type="subunit">
    <text evidence="1">Part of the 30S ribosomal subunit. Forms a tight heterodimer with protein bS6.</text>
</comment>
<comment type="similarity">
    <text evidence="1">Belongs to the bacterial ribosomal protein bS18 family.</text>
</comment>
<reference key="1">
    <citation type="journal article" date="2004" name="J. Bacteriol.">
        <title>Complete genome sequence of Rickettsia typhi and comparison with sequences of other Rickettsiae.</title>
        <authorList>
            <person name="McLeod M.P."/>
            <person name="Qin X."/>
            <person name="Karpathy S.E."/>
            <person name="Gioia J."/>
            <person name="Highlander S.K."/>
            <person name="Fox G.E."/>
            <person name="McNeill T.Z."/>
            <person name="Jiang H."/>
            <person name="Muzny D."/>
            <person name="Jacob L.S."/>
            <person name="Hawes A.C."/>
            <person name="Sodergren E."/>
            <person name="Gill R."/>
            <person name="Hume J."/>
            <person name="Morgan M."/>
            <person name="Fan G."/>
            <person name="Amin A.G."/>
            <person name="Gibbs R.A."/>
            <person name="Hong C."/>
            <person name="Yu X.-J."/>
            <person name="Walker D.H."/>
            <person name="Weinstock G.M."/>
        </authorList>
    </citation>
    <scope>NUCLEOTIDE SEQUENCE [LARGE SCALE GENOMIC DNA]</scope>
    <source>
        <strain>ATCC VR-144 / Wilmington</strain>
    </source>
</reference>
<keyword id="KW-0687">Ribonucleoprotein</keyword>
<keyword id="KW-0689">Ribosomal protein</keyword>
<keyword id="KW-0694">RNA-binding</keyword>
<keyword id="KW-0699">rRNA-binding</keyword>
<protein>
    <recommendedName>
        <fullName evidence="1">Small ribosomal subunit protein bS18</fullName>
    </recommendedName>
    <alternativeName>
        <fullName evidence="2">30S ribosomal protein S18</fullName>
    </alternativeName>
</protein>
<sequence>MLKSNNASKTATCKVGDKAAKKVFFRRRKGCPLSVPNAPVIDYKNPELLIKFVSEGGRMLPSRITNVCAKKQRKLNNAIKIARILALLPFVFQAK</sequence>
<proteinExistence type="inferred from homology"/>
<accession>Q68XR6</accession>
<evidence type="ECO:0000255" key="1">
    <source>
        <dbReference type="HAMAP-Rule" id="MF_00270"/>
    </source>
</evidence>
<evidence type="ECO:0000305" key="2"/>
<dbReference type="EMBL" id="AE017197">
    <property type="protein sequence ID" value="AAU03576.1"/>
    <property type="molecule type" value="Genomic_DNA"/>
</dbReference>
<dbReference type="RefSeq" id="WP_011190563.1">
    <property type="nucleotide sequence ID" value="NC_006142.1"/>
</dbReference>
<dbReference type="SMR" id="Q68XR6"/>
<dbReference type="KEGG" id="rty:RT0090"/>
<dbReference type="eggNOG" id="COG0238">
    <property type="taxonomic scope" value="Bacteria"/>
</dbReference>
<dbReference type="HOGENOM" id="CLU_148710_2_1_5"/>
<dbReference type="OrthoDB" id="9812008at2"/>
<dbReference type="Proteomes" id="UP000000604">
    <property type="component" value="Chromosome"/>
</dbReference>
<dbReference type="GO" id="GO:0022627">
    <property type="term" value="C:cytosolic small ribosomal subunit"/>
    <property type="evidence" value="ECO:0007669"/>
    <property type="project" value="TreeGrafter"/>
</dbReference>
<dbReference type="GO" id="GO:0070181">
    <property type="term" value="F:small ribosomal subunit rRNA binding"/>
    <property type="evidence" value="ECO:0007669"/>
    <property type="project" value="TreeGrafter"/>
</dbReference>
<dbReference type="GO" id="GO:0003735">
    <property type="term" value="F:structural constituent of ribosome"/>
    <property type="evidence" value="ECO:0007669"/>
    <property type="project" value="InterPro"/>
</dbReference>
<dbReference type="GO" id="GO:0006412">
    <property type="term" value="P:translation"/>
    <property type="evidence" value="ECO:0007669"/>
    <property type="project" value="UniProtKB-UniRule"/>
</dbReference>
<dbReference type="Gene3D" id="4.10.640.10">
    <property type="entry name" value="Ribosomal protein S18"/>
    <property type="match status" value="1"/>
</dbReference>
<dbReference type="HAMAP" id="MF_00270">
    <property type="entry name" value="Ribosomal_bS18"/>
    <property type="match status" value="1"/>
</dbReference>
<dbReference type="InterPro" id="IPR001648">
    <property type="entry name" value="Ribosomal_bS18"/>
</dbReference>
<dbReference type="InterPro" id="IPR018275">
    <property type="entry name" value="Ribosomal_bS18_CS"/>
</dbReference>
<dbReference type="InterPro" id="IPR036870">
    <property type="entry name" value="Ribosomal_bS18_sf"/>
</dbReference>
<dbReference type="NCBIfam" id="TIGR00165">
    <property type="entry name" value="S18"/>
    <property type="match status" value="1"/>
</dbReference>
<dbReference type="PANTHER" id="PTHR13479">
    <property type="entry name" value="30S RIBOSOMAL PROTEIN S18"/>
    <property type="match status" value="1"/>
</dbReference>
<dbReference type="PANTHER" id="PTHR13479:SF40">
    <property type="entry name" value="SMALL RIBOSOMAL SUBUNIT PROTEIN BS18M"/>
    <property type="match status" value="1"/>
</dbReference>
<dbReference type="Pfam" id="PF01084">
    <property type="entry name" value="Ribosomal_S18"/>
    <property type="match status" value="1"/>
</dbReference>
<dbReference type="PRINTS" id="PR00974">
    <property type="entry name" value="RIBOSOMALS18"/>
</dbReference>
<dbReference type="SUPFAM" id="SSF46911">
    <property type="entry name" value="Ribosomal protein S18"/>
    <property type="match status" value="1"/>
</dbReference>
<dbReference type="PROSITE" id="PS00057">
    <property type="entry name" value="RIBOSOMAL_S18"/>
    <property type="match status" value="1"/>
</dbReference>
<organism>
    <name type="scientific">Rickettsia typhi (strain ATCC VR-144 / Wilmington)</name>
    <dbReference type="NCBI Taxonomy" id="257363"/>
    <lineage>
        <taxon>Bacteria</taxon>
        <taxon>Pseudomonadati</taxon>
        <taxon>Pseudomonadota</taxon>
        <taxon>Alphaproteobacteria</taxon>
        <taxon>Rickettsiales</taxon>
        <taxon>Rickettsiaceae</taxon>
        <taxon>Rickettsieae</taxon>
        <taxon>Rickettsia</taxon>
        <taxon>typhus group</taxon>
    </lineage>
</organism>
<feature type="chain" id="PRO_0000111219" description="Small ribosomal subunit protein bS18">
    <location>
        <begin position="1"/>
        <end position="95"/>
    </location>
</feature>
<gene>
    <name evidence="1" type="primary">rpsR</name>
    <name type="ordered locus">RT0090</name>
</gene>